<gene>
    <name type="ordered locus">lmo0169</name>
</gene>
<organism>
    <name type="scientific">Listeria monocytogenes serovar 1/2a (strain ATCC BAA-679 / EGD-e)</name>
    <dbReference type="NCBI Taxonomy" id="169963"/>
    <lineage>
        <taxon>Bacteria</taxon>
        <taxon>Bacillati</taxon>
        <taxon>Bacillota</taxon>
        <taxon>Bacilli</taxon>
        <taxon>Bacillales</taxon>
        <taxon>Listeriaceae</taxon>
        <taxon>Listeria</taxon>
    </lineage>
</organism>
<proteinExistence type="inferred from homology"/>
<name>Y169_LISMO</name>
<dbReference type="EMBL" id="AL591973">
    <property type="protein sequence ID" value="CAC98384.1"/>
    <property type="molecule type" value="Genomic_DNA"/>
</dbReference>
<dbReference type="PIR" id="AB1096">
    <property type="entry name" value="AB1096"/>
</dbReference>
<dbReference type="RefSeq" id="NP_463702.1">
    <property type="nucleotide sequence ID" value="NC_003210.1"/>
</dbReference>
<dbReference type="RefSeq" id="WP_009911764.1">
    <property type="nucleotide sequence ID" value="NZ_CP149495.1"/>
</dbReference>
<dbReference type="SMR" id="Q8YAF7"/>
<dbReference type="STRING" id="169963.gene:17592805"/>
<dbReference type="PaxDb" id="169963-lmo0169"/>
<dbReference type="DNASU" id="986890"/>
<dbReference type="EnsemblBacteria" id="CAC98384">
    <property type="protein sequence ID" value="CAC98384"/>
    <property type="gene ID" value="CAC98384"/>
</dbReference>
<dbReference type="GeneID" id="986890"/>
<dbReference type="KEGG" id="lmo:lmo0169"/>
<dbReference type="PATRIC" id="fig|169963.11.peg.172"/>
<dbReference type="eggNOG" id="COG4975">
    <property type="taxonomic scope" value="Bacteria"/>
</dbReference>
<dbReference type="HOGENOM" id="CLU_076024_0_0_9"/>
<dbReference type="OrthoDB" id="1452595at2"/>
<dbReference type="PhylomeDB" id="Q8YAF7"/>
<dbReference type="BioCyc" id="LMON169963:LMO0169-MONOMER"/>
<dbReference type="Proteomes" id="UP000000817">
    <property type="component" value="Chromosome"/>
</dbReference>
<dbReference type="GO" id="GO:0005886">
    <property type="term" value="C:plasma membrane"/>
    <property type="evidence" value="ECO:0007669"/>
    <property type="project" value="UniProtKB-SubCell"/>
</dbReference>
<dbReference type="GO" id="GO:0015144">
    <property type="term" value="F:carbohydrate transmembrane transporter activity"/>
    <property type="evidence" value="ECO:0007669"/>
    <property type="project" value="InterPro"/>
</dbReference>
<dbReference type="CDD" id="cd23112">
    <property type="entry name" value="glucose_uptake_GlcU"/>
    <property type="match status" value="1"/>
</dbReference>
<dbReference type="InterPro" id="IPR010651">
    <property type="entry name" value="Sugar_transport"/>
</dbReference>
<dbReference type="PANTHER" id="PTHR16119">
    <property type="entry name" value="TRANSMEMBRANE PROTEIN 144"/>
    <property type="match status" value="1"/>
</dbReference>
<dbReference type="PANTHER" id="PTHR16119:SF17">
    <property type="entry name" value="TRANSMEMBRANE PROTEIN 144"/>
    <property type="match status" value="1"/>
</dbReference>
<dbReference type="Pfam" id="PF06800">
    <property type="entry name" value="Sugar_transport"/>
    <property type="match status" value="1"/>
</dbReference>
<dbReference type="SUPFAM" id="SSF103481">
    <property type="entry name" value="Multidrug resistance efflux transporter EmrE"/>
    <property type="match status" value="2"/>
</dbReference>
<comment type="subcellular location">
    <subcellularLocation>
        <location evidence="2">Cell membrane</location>
        <topology evidence="2">Multi-pass membrane protein</topology>
    </subcellularLocation>
</comment>
<comment type="similarity">
    <text evidence="2">Belongs to the GRP transporter (TC 2.A.7.5) family.</text>
</comment>
<reference key="1">
    <citation type="journal article" date="2001" name="Science">
        <title>Comparative genomics of Listeria species.</title>
        <authorList>
            <person name="Glaser P."/>
            <person name="Frangeul L."/>
            <person name="Buchrieser C."/>
            <person name="Rusniok C."/>
            <person name="Amend A."/>
            <person name="Baquero F."/>
            <person name="Berche P."/>
            <person name="Bloecker H."/>
            <person name="Brandt P."/>
            <person name="Chakraborty T."/>
            <person name="Charbit A."/>
            <person name="Chetouani F."/>
            <person name="Couve E."/>
            <person name="de Daruvar A."/>
            <person name="Dehoux P."/>
            <person name="Domann E."/>
            <person name="Dominguez-Bernal G."/>
            <person name="Duchaud E."/>
            <person name="Durant L."/>
            <person name="Dussurget O."/>
            <person name="Entian K.-D."/>
            <person name="Fsihi H."/>
            <person name="Garcia-del Portillo F."/>
            <person name="Garrido P."/>
            <person name="Gautier L."/>
            <person name="Goebel W."/>
            <person name="Gomez-Lopez N."/>
            <person name="Hain T."/>
            <person name="Hauf J."/>
            <person name="Jackson D."/>
            <person name="Jones L.-M."/>
            <person name="Kaerst U."/>
            <person name="Kreft J."/>
            <person name="Kuhn M."/>
            <person name="Kunst F."/>
            <person name="Kurapkat G."/>
            <person name="Madueno E."/>
            <person name="Maitournam A."/>
            <person name="Mata Vicente J."/>
            <person name="Ng E."/>
            <person name="Nedjari H."/>
            <person name="Nordsiek G."/>
            <person name="Novella S."/>
            <person name="de Pablos B."/>
            <person name="Perez-Diaz J.-C."/>
            <person name="Purcell R."/>
            <person name="Remmel B."/>
            <person name="Rose M."/>
            <person name="Schlueter T."/>
            <person name="Simoes N."/>
            <person name="Tierrez A."/>
            <person name="Vazquez-Boland J.-A."/>
            <person name="Voss H."/>
            <person name="Wehland J."/>
            <person name="Cossart P."/>
        </authorList>
    </citation>
    <scope>NUCLEOTIDE SEQUENCE [LARGE SCALE GENOMIC DNA]</scope>
    <source>
        <strain>ATCC BAA-679 / EGD-e</strain>
    </source>
</reference>
<accession>Q8YAF7</accession>
<keyword id="KW-1003">Cell membrane</keyword>
<keyword id="KW-0472">Membrane</keyword>
<keyword id="KW-1185">Reference proteome</keyword>
<keyword id="KW-0762">Sugar transport</keyword>
<keyword id="KW-0812">Transmembrane</keyword>
<keyword id="KW-1133">Transmembrane helix</keyword>
<keyword id="KW-0813">Transport</keyword>
<protein>
    <recommendedName>
        <fullName>Putative sugar uptake protein lmo0169</fullName>
    </recommendedName>
</protein>
<feature type="chain" id="PRO_0000213658" description="Putative sugar uptake protein lmo0169">
    <location>
        <begin position="1"/>
        <end position="285"/>
    </location>
</feature>
<feature type="transmembrane region" description="Helical" evidence="1">
    <location>
        <begin position="5"/>
        <end position="24"/>
    </location>
</feature>
<feature type="transmembrane region" description="Helical" evidence="1">
    <location>
        <begin position="31"/>
        <end position="48"/>
    </location>
</feature>
<feature type="transmembrane region" description="Helical" evidence="1">
    <location>
        <begin position="53"/>
        <end position="71"/>
    </location>
</feature>
<feature type="transmembrane region" description="Helical" evidence="1">
    <location>
        <begin position="84"/>
        <end position="106"/>
    </location>
</feature>
<feature type="transmembrane region" description="Helical" evidence="1">
    <location>
        <begin position="116"/>
        <end position="135"/>
    </location>
</feature>
<feature type="transmembrane region" description="Helical" evidence="1">
    <location>
        <begin position="151"/>
        <end position="173"/>
    </location>
</feature>
<feature type="transmembrane region" description="Helical" evidence="1">
    <location>
        <begin position="178"/>
        <end position="195"/>
    </location>
</feature>
<feature type="transmembrane region" description="Helical" evidence="1">
    <location>
        <begin position="207"/>
        <end position="226"/>
    </location>
</feature>
<feature type="transmembrane region" description="Helical" evidence="1">
    <location>
        <begin position="232"/>
        <end position="254"/>
    </location>
</feature>
<feature type="transmembrane region" description="Helical" evidence="1">
    <location>
        <begin position="263"/>
        <end position="282"/>
    </location>
</feature>
<sequence length="285" mass="30637">MNIVIALIPAVMWGIMPLVVSKIGGKPRQQIIGTTFGALAFAIGVFIFTNPEYTATIIIASFVSGAFWSLGQMNQFRAFTQVGVSKTMPLSTGMQLVGTSLFGVFAFHEWGTTSKLVLGFSALALIIIGIFLTSYQQHKDENSGQNMKKGIITLLISSVGYVGYVVITRWFDISGWDAILPQAIGMVVAGLLFSIKSEEKRFTKQTWLNMIPGVMWATGNLALLFSNKLVGIATGFSLSQMGVVISTIGGILFLGEKKTKKELILVIIGVVLVIIGGTMIGIAKS</sequence>
<evidence type="ECO:0000255" key="1"/>
<evidence type="ECO:0000305" key="2"/>